<keyword id="KW-0408">Iron</keyword>
<keyword id="KW-0479">Metal-binding</keyword>
<keyword id="KW-0560">Oxidoreductase</keyword>
<keyword id="KW-1185">Reference proteome</keyword>
<protein>
    <recommendedName>
        <fullName>Superoxide dismutase [Fe]</fullName>
        <ecNumber>1.15.1.1</ecNumber>
    </recommendedName>
</protein>
<sequence>MAFVQEPLPYDFNALEQYGMKGETFEYHYGKHHKAYVDNLNKLTDGTELADKSLEEVIQIAFKDASKAGIFNNAAQVWNHTFFWNSLKPAGGGAPTGEFAAKINQDFGSFDKLKEEFSNAAATQFGSGWAWLIDDGGTLKVTKTPNAENPLAHGQKALLTLDVWEHAYYIDFRNARPAFIKNYLDNLVNWDFAAANYAKA</sequence>
<reference key="1">
    <citation type="journal article" date="2001" name="DNA Res.">
        <title>Complete genomic sequence of the filamentous nitrogen-fixing cyanobacterium Anabaena sp. strain PCC 7120.</title>
        <authorList>
            <person name="Kaneko T."/>
            <person name="Nakamura Y."/>
            <person name="Wolk C.P."/>
            <person name="Kuritz T."/>
            <person name="Sasamoto S."/>
            <person name="Watanabe A."/>
            <person name="Iriguchi M."/>
            <person name="Ishikawa A."/>
            <person name="Kawashima K."/>
            <person name="Kimura T."/>
            <person name="Kishida Y."/>
            <person name="Kohara M."/>
            <person name="Matsumoto M."/>
            <person name="Matsuno A."/>
            <person name="Muraki A."/>
            <person name="Nakazaki N."/>
            <person name="Shimpo S."/>
            <person name="Sugimoto M."/>
            <person name="Takazawa M."/>
            <person name="Yamada M."/>
            <person name="Yasuda M."/>
            <person name="Tabata S."/>
        </authorList>
    </citation>
    <scope>NUCLEOTIDE SEQUENCE [LARGE SCALE GENOMIC DNA]</scope>
    <source>
        <strain>PCC 7120 / SAG 25.82 / UTEX 2576</strain>
    </source>
</reference>
<proteinExistence type="inferred from homology"/>
<feature type="initiator methionine" description="Removed" evidence="1">
    <location>
        <position position="1"/>
    </location>
</feature>
<feature type="chain" id="PRO_0000262945" description="Superoxide dismutase [Fe]">
    <location>
        <begin position="2"/>
        <end position="200"/>
    </location>
</feature>
<feature type="binding site" evidence="1">
    <location>
        <position position="28"/>
    </location>
    <ligand>
        <name>Fe cation</name>
        <dbReference type="ChEBI" id="CHEBI:24875"/>
    </ligand>
</feature>
<feature type="binding site" evidence="1">
    <location>
        <position position="80"/>
    </location>
    <ligand>
        <name>Fe cation</name>
        <dbReference type="ChEBI" id="CHEBI:24875"/>
    </ligand>
</feature>
<feature type="binding site" evidence="1">
    <location>
        <position position="162"/>
    </location>
    <ligand>
        <name>Fe cation</name>
        <dbReference type="ChEBI" id="CHEBI:24875"/>
    </ligand>
</feature>
<feature type="binding site" evidence="1">
    <location>
        <position position="166"/>
    </location>
    <ligand>
        <name>Fe cation</name>
        <dbReference type="ChEBI" id="CHEBI:24875"/>
    </ligand>
</feature>
<organism>
    <name type="scientific">Nostoc sp. (strain PCC 7120 / SAG 25.82 / UTEX 2576)</name>
    <dbReference type="NCBI Taxonomy" id="103690"/>
    <lineage>
        <taxon>Bacteria</taxon>
        <taxon>Bacillati</taxon>
        <taxon>Cyanobacteriota</taxon>
        <taxon>Cyanophyceae</taxon>
        <taxon>Nostocales</taxon>
        <taxon>Nostocaceae</taxon>
        <taxon>Nostoc</taxon>
    </lineage>
</organism>
<accession>Q8YSZ1</accession>
<gene>
    <name type="primary">sodB</name>
    <name type="ordered locus">alr2938</name>
</gene>
<evidence type="ECO:0000250" key="1"/>
<evidence type="ECO:0000305" key="2"/>
<name>SODF_NOSS1</name>
<comment type="function">
    <text>Destroys superoxide anion radicals which are normally produced within the cells and which are toxic to biological systems.</text>
</comment>
<comment type="catalytic activity">
    <reaction>
        <text>2 superoxide + 2 H(+) = H2O2 + O2</text>
        <dbReference type="Rhea" id="RHEA:20696"/>
        <dbReference type="ChEBI" id="CHEBI:15378"/>
        <dbReference type="ChEBI" id="CHEBI:15379"/>
        <dbReference type="ChEBI" id="CHEBI:16240"/>
        <dbReference type="ChEBI" id="CHEBI:18421"/>
        <dbReference type="EC" id="1.15.1.1"/>
    </reaction>
</comment>
<comment type="cofactor">
    <cofactor evidence="1">
        <name>Fe cation</name>
        <dbReference type="ChEBI" id="CHEBI:24875"/>
    </cofactor>
    <text evidence="1">Binds 1 Fe cation per subunit.</text>
</comment>
<comment type="subunit">
    <text evidence="1">Homodimer.</text>
</comment>
<comment type="similarity">
    <text evidence="2">Belongs to the iron/manganese superoxide dismutase family.</text>
</comment>
<dbReference type="EC" id="1.15.1.1"/>
<dbReference type="EMBL" id="BA000019">
    <property type="protein sequence ID" value="BAB74637.1"/>
    <property type="molecule type" value="Genomic_DNA"/>
</dbReference>
<dbReference type="PIR" id="AC2173">
    <property type="entry name" value="AC2173"/>
</dbReference>
<dbReference type="RefSeq" id="WP_010997089.1">
    <property type="nucleotide sequence ID" value="NZ_RSCN01000003.1"/>
</dbReference>
<dbReference type="SMR" id="Q8YSZ1"/>
<dbReference type="STRING" id="103690.gene:10494974"/>
<dbReference type="KEGG" id="ana:alr2938"/>
<dbReference type="eggNOG" id="COG0605">
    <property type="taxonomic scope" value="Bacteria"/>
</dbReference>
<dbReference type="OrthoDB" id="9803125at2"/>
<dbReference type="BRENDA" id="1.15.1.1">
    <property type="organism ID" value="8113"/>
</dbReference>
<dbReference type="Proteomes" id="UP000002483">
    <property type="component" value="Chromosome"/>
</dbReference>
<dbReference type="GO" id="GO:0046872">
    <property type="term" value="F:metal ion binding"/>
    <property type="evidence" value="ECO:0007669"/>
    <property type="project" value="UniProtKB-KW"/>
</dbReference>
<dbReference type="GO" id="GO:0004784">
    <property type="term" value="F:superoxide dismutase activity"/>
    <property type="evidence" value="ECO:0007669"/>
    <property type="project" value="UniProtKB-EC"/>
</dbReference>
<dbReference type="FunFam" id="1.10.287.990:FF:000002">
    <property type="entry name" value="Superoxide dismutase"/>
    <property type="match status" value="1"/>
</dbReference>
<dbReference type="FunFam" id="3.55.40.20:FF:000001">
    <property type="entry name" value="Superoxide dismutase"/>
    <property type="match status" value="1"/>
</dbReference>
<dbReference type="Gene3D" id="1.10.287.990">
    <property type="entry name" value="Fe,Mn superoxide dismutase (SOD) domain"/>
    <property type="match status" value="1"/>
</dbReference>
<dbReference type="Gene3D" id="3.55.40.20">
    <property type="entry name" value="Iron/manganese superoxide dismutase, C-terminal domain"/>
    <property type="match status" value="1"/>
</dbReference>
<dbReference type="InterPro" id="IPR001189">
    <property type="entry name" value="Mn/Fe_SOD"/>
</dbReference>
<dbReference type="InterPro" id="IPR019833">
    <property type="entry name" value="Mn/Fe_SOD_BS"/>
</dbReference>
<dbReference type="InterPro" id="IPR019832">
    <property type="entry name" value="Mn/Fe_SOD_C"/>
</dbReference>
<dbReference type="InterPro" id="IPR019831">
    <property type="entry name" value="Mn/Fe_SOD_N"/>
</dbReference>
<dbReference type="InterPro" id="IPR036324">
    <property type="entry name" value="Mn/Fe_SOD_N_sf"/>
</dbReference>
<dbReference type="InterPro" id="IPR036314">
    <property type="entry name" value="SOD_C_sf"/>
</dbReference>
<dbReference type="PANTHER" id="PTHR42769">
    <property type="entry name" value="SUPEROXIDE DISMUTASE"/>
    <property type="match status" value="1"/>
</dbReference>
<dbReference type="PANTHER" id="PTHR42769:SF3">
    <property type="entry name" value="SUPEROXIDE DISMUTASE [FE] 2, CHLOROPLASTIC"/>
    <property type="match status" value="1"/>
</dbReference>
<dbReference type="Pfam" id="PF02777">
    <property type="entry name" value="Sod_Fe_C"/>
    <property type="match status" value="1"/>
</dbReference>
<dbReference type="Pfam" id="PF00081">
    <property type="entry name" value="Sod_Fe_N"/>
    <property type="match status" value="1"/>
</dbReference>
<dbReference type="PIRSF" id="PIRSF000349">
    <property type="entry name" value="SODismutase"/>
    <property type="match status" value="1"/>
</dbReference>
<dbReference type="PRINTS" id="PR01703">
    <property type="entry name" value="MNSODISMTASE"/>
</dbReference>
<dbReference type="SUPFAM" id="SSF54719">
    <property type="entry name" value="Fe,Mn superoxide dismutase (SOD), C-terminal domain"/>
    <property type="match status" value="1"/>
</dbReference>
<dbReference type="SUPFAM" id="SSF46609">
    <property type="entry name" value="Fe,Mn superoxide dismutase (SOD), N-terminal domain"/>
    <property type="match status" value="1"/>
</dbReference>
<dbReference type="PROSITE" id="PS00088">
    <property type="entry name" value="SOD_MN"/>
    <property type="match status" value="1"/>
</dbReference>